<reference key="1">
    <citation type="journal article" date="2002" name="Proc. Natl. Acad. Sci. U.S.A.">
        <title>Extensive mosaic structure revealed by the complete genome sequence of uropathogenic Escherichia coli.</title>
        <authorList>
            <person name="Welch R.A."/>
            <person name="Burland V."/>
            <person name="Plunkett G. III"/>
            <person name="Redford P."/>
            <person name="Roesch P."/>
            <person name="Rasko D."/>
            <person name="Buckles E.L."/>
            <person name="Liou S.-R."/>
            <person name="Boutin A."/>
            <person name="Hackett J."/>
            <person name="Stroud D."/>
            <person name="Mayhew G.F."/>
            <person name="Rose D.J."/>
            <person name="Zhou S."/>
            <person name="Schwartz D.C."/>
            <person name="Perna N.T."/>
            <person name="Mobley H.L.T."/>
            <person name="Donnenberg M.S."/>
            <person name="Blattner F.R."/>
        </authorList>
    </citation>
    <scope>NUCLEOTIDE SEQUENCE [LARGE SCALE GENOMIC DNA]</scope>
    <source>
        <strain>CFT073 / ATCC 700928 / UPEC</strain>
    </source>
</reference>
<name>YIAF_ECOL6</name>
<comment type="sequence caution" evidence="1">
    <conflict type="erroneous initiation">
        <sequence resource="EMBL-CDS" id="AAN82809"/>
    </conflict>
</comment>
<feature type="chain" id="PRO_0000169592" description="Uncharacterized protein YiaF">
    <location>
        <begin position="1"/>
        <end position="236"/>
    </location>
</feature>
<accession>P0ADK1</accession>
<accession>P37667</accession>
<keyword id="KW-1185">Reference proteome</keyword>
<sequence length="236" mass="25663">MATGKSCSRWFAPLAALLMVVSLSGCFDKEGDQRKAFIDFLQNTVMRSGERLPTLTADQKKQFGPFVSDYAILYGYSQQVNQAMDSGLRPVVDSVNAIRVPQDYVTQSGPLREMNGSLGVLAQQLQNAKLQADAAHSALKQSDDLKPVFDQAFTKVVTTPADALQPLIPAAQTFTQQLVMVGDYIAQQGTQVSFVANGIQFPTSQQASEYNKLIAPLPAQHQAFNQAWTTAVTATQ</sequence>
<organism>
    <name type="scientific">Escherichia coli O6:H1 (strain CFT073 / ATCC 700928 / UPEC)</name>
    <dbReference type="NCBI Taxonomy" id="199310"/>
    <lineage>
        <taxon>Bacteria</taxon>
        <taxon>Pseudomonadati</taxon>
        <taxon>Pseudomonadota</taxon>
        <taxon>Gammaproteobacteria</taxon>
        <taxon>Enterobacterales</taxon>
        <taxon>Enterobacteriaceae</taxon>
        <taxon>Escherichia</taxon>
    </lineage>
</organism>
<gene>
    <name type="primary">yiaF</name>
    <name type="ordered locus">c4373</name>
</gene>
<dbReference type="EMBL" id="AE014075">
    <property type="protein sequence ID" value="AAN82809.1"/>
    <property type="status" value="ALT_INIT"/>
    <property type="molecule type" value="Genomic_DNA"/>
</dbReference>
<dbReference type="RefSeq" id="WP_000190516.1">
    <property type="nucleotide sequence ID" value="NZ_CP051263.1"/>
</dbReference>
<dbReference type="STRING" id="199310.c4373"/>
<dbReference type="KEGG" id="ecc:c4373"/>
<dbReference type="eggNOG" id="ENOG502ZAGZ">
    <property type="taxonomic scope" value="Bacteria"/>
</dbReference>
<dbReference type="HOGENOM" id="CLU_086363_0_0_6"/>
<dbReference type="Proteomes" id="UP000001410">
    <property type="component" value="Chromosome"/>
</dbReference>
<dbReference type="InterPro" id="IPR021413">
    <property type="entry name" value="DUF3053"/>
</dbReference>
<dbReference type="Pfam" id="PF11254">
    <property type="entry name" value="DUF3053"/>
    <property type="match status" value="1"/>
</dbReference>
<dbReference type="PROSITE" id="PS51257">
    <property type="entry name" value="PROKAR_LIPOPROTEIN"/>
    <property type="match status" value="1"/>
</dbReference>
<proteinExistence type="predicted"/>
<protein>
    <recommendedName>
        <fullName>Uncharacterized protein YiaF</fullName>
    </recommendedName>
</protein>
<evidence type="ECO:0000305" key="1"/>